<protein>
    <recommendedName>
        <fullName>Pyrrolidone-carboxylate peptidase</fullName>
        <ecNumber>3.4.19.3</ecNumber>
    </recommendedName>
    <alternativeName>
        <fullName>5-oxoprolyl-peptidase</fullName>
    </alternativeName>
    <alternativeName>
        <fullName>Pyroglutamyl-peptidase I</fullName>
        <shortName>PGP-I</shortName>
        <shortName>Pyrase</shortName>
    </alternativeName>
</protein>
<feature type="chain" id="PRO_0000184706" description="Pyrrolidone-carboxylate peptidase">
    <location>
        <begin position="1"/>
        <end position="215"/>
    </location>
</feature>
<feature type="active site">
    <location>
        <position position="81"/>
    </location>
</feature>
<feature type="active site">
    <location>
        <position position="144"/>
    </location>
</feature>
<feature type="active site">
    <location>
        <position position="168"/>
    </location>
</feature>
<feature type="mutagenesis site" description="No loss of activity." evidence="1">
    <original>C</original>
    <variation>S</variation>
    <location>
        <position position="68"/>
    </location>
</feature>
<feature type="mutagenesis site" description="Loss of activity." evidence="1">
    <original>C</original>
    <variation>S</variation>
    <location>
        <position position="144"/>
    </location>
</feature>
<feature type="strand" evidence="3">
    <location>
        <begin position="3"/>
        <end position="10"/>
    </location>
</feature>
<feature type="helix" evidence="3">
    <location>
        <begin position="20"/>
        <end position="27"/>
    </location>
</feature>
<feature type="turn" evidence="3">
    <location>
        <begin position="28"/>
        <end position="30"/>
    </location>
</feature>
<feature type="strand" evidence="3">
    <location>
        <begin position="36"/>
        <end position="43"/>
    </location>
</feature>
<feature type="helix" evidence="3">
    <location>
        <begin position="49"/>
        <end position="61"/>
    </location>
</feature>
<feature type="strand" evidence="3">
    <location>
        <begin position="64"/>
        <end position="71"/>
    </location>
</feature>
<feature type="strand" evidence="3">
    <location>
        <begin position="77"/>
        <end position="86"/>
    </location>
</feature>
<feature type="strand" evidence="3">
    <location>
        <begin position="111"/>
        <end position="114"/>
    </location>
</feature>
<feature type="helix" evidence="3">
    <location>
        <begin position="119"/>
        <end position="128"/>
    </location>
</feature>
<feature type="helix" evidence="3">
    <location>
        <begin position="143"/>
        <end position="158"/>
    </location>
</feature>
<feature type="strand" evidence="3">
    <location>
        <begin position="163"/>
        <end position="169"/>
    </location>
</feature>
<feature type="helix" evidence="3">
    <location>
        <begin position="173"/>
        <end position="175"/>
    </location>
</feature>
<feature type="strand" evidence="3">
    <location>
        <begin position="177"/>
        <end position="179"/>
    </location>
</feature>
<feature type="helix" evidence="3">
    <location>
        <begin position="186"/>
        <end position="202"/>
    </location>
</feature>
<comment type="function">
    <text>Removes 5-oxoproline from various penultimate amino acid residues except L-proline.</text>
</comment>
<comment type="catalytic activity">
    <reaction>
        <text>Release of an N-terminal pyroglutamyl group from a polypeptide, the second amino acid generally not being Pro.</text>
        <dbReference type="EC" id="3.4.19.3"/>
    </reaction>
</comment>
<comment type="biophysicochemical properties">
    <phDependence>
        <text>Optimum pH is 6.5. Stable from pH 7.0 to 9.0.</text>
    </phDependence>
</comment>
<comment type="subunit">
    <text>Homotetramer.</text>
</comment>
<comment type="subcellular location">
    <subcellularLocation>
        <location>Cytoplasm</location>
    </subcellularLocation>
</comment>
<comment type="similarity">
    <text evidence="2">Belongs to the peptidase C15 family.</text>
</comment>
<sequence length="215" mass="23287">MEKKVLLTGFDPFGGETVNPSWEAVKRLNGAAEGPASIVSEQVPTVFYKSLAVLREAIKKHQPDIIICVGQAGGRMQITPERVAINLNEARIPDNEGNQPVGEDISQGGPAAYWTGLPIKRIVEEIKKEGIPAAVSYTAGTFVCNHLFYGLMDEISRHHPHIRGGFIHIPYIPEQTLQKSAPSLSLDHITKALKIAAVTAAVHEDDIETGGGELH</sequence>
<proteinExistence type="evidence at protein level"/>
<name>PCP_BACAM</name>
<keyword id="KW-0002">3D-structure</keyword>
<keyword id="KW-0963">Cytoplasm</keyword>
<keyword id="KW-0378">Hydrolase</keyword>
<keyword id="KW-0645">Protease</keyword>
<keyword id="KW-0788">Thiol protease</keyword>
<gene>
    <name type="primary">pcp</name>
</gene>
<reference key="1">
    <citation type="journal article" date="1993" name="J. Biochem.">
        <title>Pyroglutamyl peptidase gene from Bacillus amyloliquefaciens: cloning, sequencing, expression, and crystallization of the expressed enzyme.</title>
        <authorList>
            <person name="Yoshimoto T."/>
            <person name="Shimoda T."/>
            <person name="Kitazono A."/>
            <person name="Kabashima T."/>
            <person name="Ito K."/>
            <person name="Tsuru D."/>
        </authorList>
    </citation>
    <scope>NUCLEOTIDE SEQUENCE [GENOMIC DNA]</scope>
    <scope>MUTAGENESIS OF CYS-68 AND CYS-144</scope>
</reference>
<reference key="2">
    <citation type="journal article" date="1999" name="Structure">
        <title>The crystal structure of pyroglutamyl peptidase I from Bacillus amyloliquefaciens reveals a new structure for a cysteine protease.</title>
        <authorList>
            <person name="Odagaki Y."/>
            <person name="Hayashi A."/>
            <person name="Okada K."/>
            <person name="Hirotsu K."/>
            <person name="Kabashima T."/>
            <person name="Ito K."/>
            <person name="Yoshimoto T."/>
            <person name="Tsuru D."/>
            <person name="Sato M."/>
            <person name="Clardy J."/>
        </authorList>
    </citation>
    <scope>X-RAY CRYSTALLOGRAPHY (2.0 ANGSTROMS)</scope>
</reference>
<accession>P46107</accession>
<dbReference type="EC" id="3.4.19.3"/>
<dbReference type="EMBL" id="D11035">
    <property type="protein sequence ID" value="BAA01791.1"/>
    <property type="molecule type" value="Genomic_DNA"/>
</dbReference>
<dbReference type="PIR" id="JX0244">
    <property type="entry name" value="JX0244"/>
</dbReference>
<dbReference type="RefSeq" id="WP_013350909.1">
    <property type="nucleotide sequence ID" value="NZ_VRTX01000011.1"/>
</dbReference>
<dbReference type="PDB" id="1AUG">
    <property type="method" value="X-ray"/>
    <property type="resolution" value="2.00 A"/>
    <property type="chains" value="A/B/C/D=1-215"/>
</dbReference>
<dbReference type="PDB" id="3RNZ">
    <property type="method" value="X-ray"/>
    <property type="resolution" value="2.01 A"/>
    <property type="chains" value="A/B/C/D=1-215"/>
</dbReference>
<dbReference type="PDB" id="3RO0">
    <property type="method" value="X-ray"/>
    <property type="resolution" value="1.50 A"/>
    <property type="chains" value="A/B/C/D=1-215"/>
</dbReference>
<dbReference type="PDBsum" id="1AUG"/>
<dbReference type="PDBsum" id="3RNZ"/>
<dbReference type="PDBsum" id="3RO0"/>
<dbReference type="SMR" id="P46107"/>
<dbReference type="STRING" id="692420.BAMF_0240"/>
<dbReference type="MEROPS" id="C15.001"/>
<dbReference type="eggNOG" id="COG2039">
    <property type="taxonomic scope" value="Bacteria"/>
</dbReference>
<dbReference type="OMA" id="VCNHVFY"/>
<dbReference type="OrthoDB" id="9779738at2"/>
<dbReference type="EvolutionaryTrace" id="P46107"/>
<dbReference type="GO" id="GO:0005829">
    <property type="term" value="C:cytosol"/>
    <property type="evidence" value="ECO:0007669"/>
    <property type="project" value="InterPro"/>
</dbReference>
<dbReference type="GO" id="GO:0016920">
    <property type="term" value="F:pyroglutamyl-peptidase activity"/>
    <property type="evidence" value="ECO:0007669"/>
    <property type="project" value="UniProtKB-UniRule"/>
</dbReference>
<dbReference type="GO" id="GO:0006508">
    <property type="term" value="P:proteolysis"/>
    <property type="evidence" value="ECO:0007669"/>
    <property type="project" value="UniProtKB-KW"/>
</dbReference>
<dbReference type="CDD" id="cd00501">
    <property type="entry name" value="Peptidase_C15"/>
    <property type="match status" value="1"/>
</dbReference>
<dbReference type="FunFam" id="3.40.630.20:FF:000001">
    <property type="entry name" value="Pyrrolidone-carboxylate peptidase"/>
    <property type="match status" value="1"/>
</dbReference>
<dbReference type="Gene3D" id="3.40.630.20">
    <property type="entry name" value="Peptidase C15, pyroglutamyl peptidase I-like"/>
    <property type="match status" value="1"/>
</dbReference>
<dbReference type="HAMAP" id="MF_00417">
    <property type="entry name" value="Pyrrolid_peptidase"/>
    <property type="match status" value="1"/>
</dbReference>
<dbReference type="InterPro" id="IPR000816">
    <property type="entry name" value="Peptidase_C15"/>
</dbReference>
<dbReference type="InterPro" id="IPR016125">
    <property type="entry name" value="Peptidase_C15-like"/>
</dbReference>
<dbReference type="InterPro" id="IPR036440">
    <property type="entry name" value="Peptidase_C15-like_sf"/>
</dbReference>
<dbReference type="InterPro" id="IPR029762">
    <property type="entry name" value="PGP-I_bact-type"/>
</dbReference>
<dbReference type="InterPro" id="IPR033694">
    <property type="entry name" value="PGPEP1_Cys_AS"/>
</dbReference>
<dbReference type="InterPro" id="IPR033693">
    <property type="entry name" value="PGPEP1_Glu_AS"/>
</dbReference>
<dbReference type="NCBIfam" id="NF009676">
    <property type="entry name" value="PRK13197.1"/>
    <property type="match status" value="1"/>
</dbReference>
<dbReference type="NCBIfam" id="TIGR00504">
    <property type="entry name" value="pyro_pdase"/>
    <property type="match status" value="1"/>
</dbReference>
<dbReference type="PANTHER" id="PTHR23402">
    <property type="entry name" value="PROTEASE FAMILY C15 PYROGLUTAMYL-PEPTIDASE I-RELATED"/>
    <property type="match status" value="1"/>
</dbReference>
<dbReference type="PANTHER" id="PTHR23402:SF1">
    <property type="entry name" value="PYROGLUTAMYL-PEPTIDASE I"/>
    <property type="match status" value="1"/>
</dbReference>
<dbReference type="Pfam" id="PF01470">
    <property type="entry name" value="Peptidase_C15"/>
    <property type="match status" value="1"/>
</dbReference>
<dbReference type="PIRSF" id="PIRSF015592">
    <property type="entry name" value="Prld-crbxl_pptds"/>
    <property type="match status" value="1"/>
</dbReference>
<dbReference type="PRINTS" id="PR00706">
    <property type="entry name" value="PYROGLUPTASE"/>
</dbReference>
<dbReference type="SUPFAM" id="SSF53182">
    <property type="entry name" value="Pyrrolidone carboxyl peptidase (pyroglutamate aminopeptidase)"/>
    <property type="match status" value="1"/>
</dbReference>
<dbReference type="PROSITE" id="PS01334">
    <property type="entry name" value="PYRASE_CYS"/>
    <property type="match status" value="1"/>
</dbReference>
<dbReference type="PROSITE" id="PS01333">
    <property type="entry name" value="PYRASE_GLU"/>
    <property type="match status" value="1"/>
</dbReference>
<organism>
    <name type="scientific">Bacillus amyloliquefaciens</name>
    <name type="common">Bacillus velezensis</name>
    <dbReference type="NCBI Taxonomy" id="1390"/>
    <lineage>
        <taxon>Bacteria</taxon>
        <taxon>Bacillati</taxon>
        <taxon>Bacillota</taxon>
        <taxon>Bacilli</taxon>
        <taxon>Bacillales</taxon>
        <taxon>Bacillaceae</taxon>
        <taxon>Bacillus</taxon>
        <taxon>Bacillus amyloliquefaciens group</taxon>
    </lineage>
</organism>
<evidence type="ECO:0000269" key="1">
    <source>
    </source>
</evidence>
<evidence type="ECO:0000305" key="2"/>
<evidence type="ECO:0007829" key="3">
    <source>
        <dbReference type="PDB" id="3RO0"/>
    </source>
</evidence>